<accession>A5D5H9</accession>
<sequence length="129" mass="13219">MSKVQEILEAVKGLTVLELSELVKAFEEEFGVSAAAPVAVAAAPGAAAAPAAPAAAEEEQTEFDVILTAVGDKKVNVIKVVREITGLGLKEAKDLVDGAPKPVKEKVSKEEAAAIKAKLTEAGATVEVK</sequence>
<organism>
    <name type="scientific">Pelotomaculum thermopropionicum (strain DSM 13744 / JCM 10971 / SI)</name>
    <dbReference type="NCBI Taxonomy" id="370438"/>
    <lineage>
        <taxon>Bacteria</taxon>
        <taxon>Bacillati</taxon>
        <taxon>Bacillota</taxon>
        <taxon>Clostridia</taxon>
        <taxon>Eubacteriales</taxon>
        <taxon>Desulfotomaculaceae</taxon>
        <taxon>Pelotomaculum</taxon>
    </lineage>
</organism>
<comment type="function">
    <text evidence="1">Forms part of the ribosomal stalk which helps the ribosome interact with GTP-bound translation factors. Is thus essential for accurate translation.</text>
</comment>
<comment type="subunit">
    <text evidence="1">Homodimer. Part of the ribosomal stalk of the 50S ribosomal subunit. Forms a multimeric L10(L12)X complex, where L10 forms an elongated spine to which 2 to 4 L12 dimers bind in a sequential fashion. Binds GTP-bound translation factors.</text>
</comment>
<comment type="similarity">
    <text evidence="1">Belongs to the bacterial ribosomal protein bL12 family.</text>
</comment>
<reference key="1">
    <citation type="journal article" date="2008" name="Genome Res.">
        <title>The genome of Pelotomaculum thermopropionicum reveals niche-associated evolution in anaerobic microbiota.</title>
        <authorList>
            <person name="Kosaka T."/>
            <person name="Kato S."/>
            <person name="Shimoyama T."/>
            <person name="Ishii S."/>
            <person name="Abe T."/>
            <person name="Watanabe K."/>
        </authorList>
    </citation>
    <scope>NUCLEOTIDE SEQUENCE [LARGE SCALE GENOMIC DNA]</scope>
    <source>
        <strain>DSM 13744 / JCM 10971 / SI</strain>
    </source>
</reference>
<gene>
    <name evidence="1" type="primary">rplL</name>
    <name type="ordered locus">PTH_0309</name>
</gene>
<protein>
    <recommendedName>
        <fullName evidence="1">Large ribosomal subunit protein bL12</fullName>
    </recommendedName>
    <alternativeName>
        <fullName evidence="2">50S ribosomal protein L7/L12</fullName>
    </alternativeName>
</protein>
<feature type="chain" id="PRO_1000079803" description="Large ribosomal subunit protein bL12">
    <location>
        <begin position="1"/>
        <end position="129"/>
    </location>
</feature>
<name>RL7_PELTS</name>
<proteinExistence type="inferred from homology"/>
<keyword id="KW-1185">Reference proteome</keyword>
<keyword id="KW-0687">Ribonucleoprotein</keyword>
<keyword id="KW-0689">Ribosomal protein</keyword>
<dbReference type="EMBL" id="AP009389">
    <property type="protein sequence ID" value="BAF58490.1"/>
    <property type="molecule type" value="Genomic_DNA"/>
</dbReference>
<dbReference type="SMR" id="A5D5H9"/>
<dbReference type="STRING" id="370438.PTH_0309"/>
<dbReference type="KEGG" id="pth:PTH_0309"/>
<dbReference type="eggNOG" id="COG0222">
    <property type="taxonomic scope" value="Bacteria"/>
</dbReference>
<dbReference type="HOGENOM" id="CLU_086499_3_2_9"/>
<dbReference type="Proteomes" id="UP000006556">
    <property type="component" value="Chromosome"/>
</dbReference>
<dbReference type="GO" id="GO:0022625">
    <property type="term" value="C:cytosolic large ribosomal subunit"/>
    <property type="evidence" value="ECO:0007669"/>
    <property type="project" value="TreeGrafter"/>
</dbReference>
<dbReference type="GO" id="GO:0003729">
    <property type="term" value="F:mRNA binding"/>
    <property type="evidence" value="ECO:0007669"/>
    <property type="project" value="TreeGrafter"/>
</dbReference>
<dbReference type="GO" id="GO:0003735">
    <property type="term" value="F:structural constituent of ribosome"/>
    <property type="evidence" value="ECO:0007669"/>
    <property type="project" value="InterPro"/>
</dbReference>
<dbReference type="GO" id="GO:0006412">
    <property type="term" value="P:translation"/>
    <property type="evidence" value="ECO:0007669"/>
    <property type="project" value="UniProtKB-UniRule"/>
</dbReference>
<dbReference type="CDD" id="cd00387">
    <property type="entry name" value="Ribosomal_L7_L12"/>
    <property type="match status" value="1"/>
</dbReference>
<dbReference type="FunFam" id="3.30.1390.10:FF:000001">
    <property type="entry name" value="50S ribosomal protein L7/L12"/>
    <property type="match status" value="1"/>
</dbReference>
<dbReference type="Gene3D" id="3.30.1390.10">
    <property type="match status" value="1"/>
</dbReference>
<dbReference type="Gene3D" id="1.20.5.710">
    <property type="entry name" value="Single helix bin"/>
    <property type="match status" value="1"/>
</dbReference>
<dbReference type="HAMAP" id="MF_00368">
    <property type="entry name" value="Ribosomal_bL12"/>
    <property type="match status" value="1"/>
</dbReference>
<dbReference type="InterPro" id="IPR000206">
    <property type="entry name" value="Ribosomal_bL12"/>
</dbReference>
<dbReference type="InterPro" id="IPR013823">
    <property type="entry name" value="Ribosomal_bL12_C"/>
</dbReference>
<dbReference type="InterPro" id="IPR014719">
    <property type="entry name" value="Ribosomal_bL12_C/ClpS-like"/>
</dbReference>
<dbReference type="InterPro" id="IPR008932">
    <property type="entry name" value="Ribosomal_bL12_oligo"/>
</dbReference>
<dbReference type="InterPro" id="IPR036235">
    <property type="entry name" value="Ribosomal_bL12_oligo_N_sf"/>
</dbReference>
<dbReference type="NCBIfam" id="TIGR00855">
    <property type="entry name" value="L12"/>
    <property type="match status" value="1"/>
</dbReference>
<dbReference type="PANTHER" id="PTHR45987">
    <property type="entry name" value="39S RIBOSOMAL PROTEIN L12"/>
    <property type="match status" value="1"/>
</dbReference>
<dbReference type="PANTHER" id="PTHR45987:SF4">
    <property type="entry name" value="LARGE RIBOSOMAL SUBUNIT PROTEIN BL12M"/>
    <property type="match status" value="1"/>
</dbReference>
<dbReference type="Pfam" id="PF00542">
    <property type="entry name" value="Ribosomal_L12"/>
    <property type="match status" value="1"/>
</dbReference>
<dbReference type="Pfam" id="PF16320">
    <property type="entry name" value="Ribosomal_L12_N"/>
    <property type="match status" value="1"/>
</dbReference>
<dbReference type="SUPFAM" id="SSF54736">
    <property type="entry name" value="ClpS-like"/>
    <property type="match status" value="1"/>
</dbReference>
<dbReference type="SUPFAM" id="SSF48300">
    <property type="entry name" value="Ribosomal protein L7/12, oligomerisation (N-terminal) domain"/>
    <property type="match status" value="1"/>
</dbReference>
<evidence type="ECO:0000255" key="1">
    <source>
        <dbReference type="HAMAP-Rule" id="MF_00368"/>
    </source>
</evidence>
<evidence type="ECO:0000305" key="2"/>